<accession>P54530</accession>
<reference key="1">
    <citation type="journal article" date="1996" name="Microbiology">
        <title>Systematic sequencing of the 283 kb 210 degrees-232 degrees region of the Bacillus subtilis genome containing the skin element and many sporulation genes.</title>
        <authorList>
            <person name="Mizuno M."/>
            <person name="Masuda S."/>
            <person name="Takemaru K."/>
            <person name="Hosono S."/>
            <person name="Sato T."/>
            <person name="Takeuchi M."/>
            <person name="Kobayashi Y."/>
        </authorList>
    </citation>
    <scope>NUCLEOTIDE SEQUENCE [GENOMIC DNA]</scope>
    <source>
        <strain>168 / JH642</strain>
    </source>
</reference>
<reference key="2">
    <citation type="journal article" date="1997" name="Nature">
        <title>The complete genome sequence of the Gram-positive bacterium Bacillus subtilis.</title>
        <authorList>
            <person name="Kunst F."/>
            <person name="Ogasawara N."/>
            <person name="Moszer I."/>
            <person name="Albertini A.M."/>
            <person name="Alloni G."/>
            <person name="Azevedo V."/>
            <person name="Bertero M.G."/>
            <person name="Bessieres P."/>
            <person name="Bolotin A."/>
            <person name="Borchert S."/>
            <person name="Borriss R."/>
            <person name="Boursier L."/>
            <person name="Brans A."/>
            <person name="Braun M."/>
            <person name="Brignell S.C."/>
            <person name="Bron S."/>
            <person name="Brouillet S."/>
            <person name="Bruschi C.V."/>
            <person name="Caldwell B."/>
            <person name="Capuano V."/>
            <person name="Carter N.M."/>
            <person name="Choi S.-K."/>
            <person name="Codani J.-J."/>
            <person name="Connerton I.F."/>
            <person name="Cummings N.J."/>
            <person name="Daniel R.A."/>
            <person name="Denizot F."/>
            <person name="Devine K.M."/>
            <person name="Duesterhoeft A."/>
            <person name="Ehrlich S.D."/>
            <person name="Emmerson P.T."/>
            <person name="Entian K.-D."/>
            <person name="Errington J."/>
            <person name="Fabret C."/>
            <person name="Ferrari E."/>
            <person name="Foulger D."/>
            <person name="Fritz C."/>
            <person name="Fujita M."/>
            <person name="Fujita Y."/>
            <person name="Fuma S."/>
            <person name="Galizzi A."/>
            <person name="Galleron N."/>
            <person name="Ghim S.-Y."/>
            <person name="Glaser P."/>
            <person name="Goffeau A."/>
            <person name="Golightly E.J."/>
            <person name="Grandi G."/>
            <person name="Guiseppi G."/>
            <person name="Guy B.J."/>
            <person name="Haga K."/>
            <person name="Haiech J."/>
            <person name="Harwood C.R."/>
            <person name="Henaut A."/>
            <person name="Hilbert H."/>
            <person name="Holsappel S."/>
            <person name="Hosono S."/>
            <person name="Hullo M.-F."/>
            <person name="Itaya M."/>
            <person name="Jones L.-M."/>
            <person name="Joris B."/>
            <person name="Karamata D."/>
            <person name="Kasahara Y."/>
            <person name="Klaerr-Blanchard M."/>
            <person name="Klein C."/>
            <person name="Kobayashi Y."/>
            <person name="Koetter P."/>
            <person name="Koningstein G."/>
            <person name="Krogh S."/>
            <person name="Kumano M."/>
            <person name="Kurita K."/>
            <person name="Lapidus A."/>
            <person name="Lardinois S."/>
            <person name="Lauber J."/>
            <person name="Lazarevic V."/>
            <person name="Lee S.-M."/>
            <person name="Levine A."/>
            <person name="Liu H."/>
            <person name="Masuda S."/>
            <person name="Mauel C."/>
            <person name="Medigue C."/>
            <person name="Medina N."/>
            <person name="Mellado R.P."/>
            <person name="Mizuno M."/>
            <person name="Moestl D."/>
            <person name="Nakai S."/>
            <person name="Noback M."/>
            <person name="Noone D."/>
            <person name="O'Reilly M."/>
            <person name="Ogawa K."/>
            <person name="Ogiwara A."/>
            <person name="Oudega B."/>
            <person name="Park S.-H."/>
            <person name="Parro V."/>
            <person name="Pohl T.M."/>
            <person name="Portetelle D."/>
            <person name="Porwollik S."/>
            <person name="Prescott A.M."/>
            <person name="Presecan E."/>
            <person name="Pujic P."/>
            <person name="Purnelle B."/>
            <person name="Rapoport G."/>
            <person name="Rey M."/>
            <person name="Reynolds S."/>
            <person name="Rieger M."/>
            <person name="Rivolta C."/>
            <person name="Rocha E."/>
            <person name="Roche B."/>
            <person name="Rose M."/>
            <person name="Sadaie Y."/>
            <person name="Sato T."/>
            <person name="Scanlan E."/>
            <person name="Schleich S."/>
            <person name="Schroeter R."/>
            <person name="Scoffone F."/>
            <person name="Sekiguchi J."/>
            <person name="Sekowska A."/>
            <person name="Seror S.J."/>
            <person name="Serror P."/>
            <person name="Shin B.-S."/>
            <person name="Soldo B."/>
            <person name="Sorokin A."/>
            <person name="Tacconi E."/>
            <person name="Takagi T."/>
            <person name="Takahashi H."/>
            <person name="Takemaru K."/>
            <person name="Takeuchi M."/>
            <person name="Tamakoshi A."/>
            <person name="Tanaka T."/>
            <person name="Terpstra P."/>
            <person name="Tognoni A."/>
            <person name="Tosato V."/>
            <person name="Uchiyama S."/>
            <person name="Vandenbol M."/>
            <person name="Vannier F."/>
            <person name="Vassarotti A."/>
            <person name="Viari A."/>
            <person name="Wambutt R."/>
            <person name="Wedler E."/>
            <person name="Wedler H."/>
            <person name="Weitzenegger T."/>
            <person name="Winters P."/>
            <person name="Wipat A."/>
            <person name="Yamamoto H."/>
            <person name="Yamane K."/>
            <person name="Yasumoto K."/>
            <person name="Yata K."/>
            <person name="Yoshida K."/>
            <person name="Yoshikawa H.-F."/>
            <person name="Zumstein E."/>
            <person name="Yoshikawa H."/>
            <person name="Danchin A."/>
        </authorList>
    </citation>
    <scope>NUCLEOTIDE SEQUENCE [LARGE SCALE GENOMIC DNA]</scope>
    <source>
        <strain>168</strain>
    </source>
</reference>
<reference key="3">
    <citation type="journal article" date="2009" name="Microbiology">
        <title>From a consortium sequence to a unified sequence: the Bacillus subtilis 168 reference genome a decade later.</title>
        <authorList>
            <person name="Barbe V."/>
            <person name="Cruveiller S."/>
            <person name="Kunst F."/>
            <person name="Lenoble P."/>
            <person name="Meurice G."/>
            <person name="Sekowska A."/>
            <person name="Vallenet D."/>
            <person name="Wang T."/>
            <person name="Moszer I."/>
            <person name="Medigue C."/>
            <person name="Danchin A."/>
        </authorList>
    </citation>
    <scope>SEQUENCE REVISION TO 234</scope>
</reference>
<dbReference type="EC" id="2.3.1.19"/>
<dbReference type="EMBL" id="D84432">
    <property type="protein sequence ID" value="BAA12594.1"/>
    <property type="molecule type" value="Genomic_DNA"/>
</dbReference>
<dbReference type="EMBL" id="AL009126">
    <property type="protein sequence ID" value="CAB14340.2"/>
    <property type="molecule type" value="Genomic_DNA"/>
</dbReference>
<dbReference type="PIR" id="A69962">
    <property type="entry name" value="A69962"/>
</dbReference>
<dbReference type="RefSeq" id="WP_004398694.1">
    <property type="nucleotide sequence ID" value="NZ_OZ025638.1"/>
</dbReference>
<dbReference type="SMR" id="P54530"/>
<dbReference type="FunCoup" id="P54530">
    <property type="interactions" value="26"/>
</dbReference>
<dbReference type="STRING" id="224308.BSU24090"/>
<dbReference type="PaxDb" id="224308-BSU24090"/>
<dbReference type="DNASU" id="938671"/>
<dbReference type="EnsemblBacteria" id="CAB14340">
    <property type="protein sequence ID" value="CAB14340"/>
    <property type="gene ID" value="BSU_24090"/>
</dbReference>
<dbReference type="GeneID" id="938671"/>
<dbReference type="KEGG" id="bsu:BSU24090"/>
<dbReference type="PATRIC" id="fig|224308.179.peg.2623"/>
<dbReference type="eggNOG" id="COG0280">
    <property type="taxonomic scope" value="Bacteria"/>
</dbReference>
<dbReference type="InParanoid" id="P54530"/>
<dbReference type="OrthoDB" id="9774179at2"/>
<dbReference type="PhylomeDB" id="P54530"/>
<dbReference type="BioCyc" id="BSUB:BSU24090-MONOMER"/>
<dbReference type="Proteomes" id="UP000001570">
    <property type="component" value="Chromosome"/>
</dbReference>
<dbReference type="GO" id="GO:0050182">
    <property type="term" value="F:phosphate butyryltransferase activity"/>
    <property type="evidence" value="ECO:0007669"/>
    <property type="project" value="UniProtKB-EC"/>
</dbReference>
<dbReference type="GO" id="GO:0019605">
    <property type="term" value="P:butyrate metabolic process"/>
    <property type="evidence" value="ECO:0007669"/>
    <property type="project" value="InterPro"/>
</dbReference>
<dbReference type="Gene3D" id="3.40.718.10">
    <property type="entry name" value="Isopropylmalate Dehydrogenase"/>
    <property type="match status" value="1"/>
</dbReference>
<dbReference type="InterPro" id="IPR012147">
    <property type="entry name" value="P_Ac_Bu_trans"/>
</dbReference>
<dbReference type="InterPro" id="IPR050500">
    <property type="entry name" value="Phos_Acetyltrans/Butyryltrans"/>
</dbReference>
<dbReference type="InterPro" id="IPR014079">
    <property type="entry name" value="Phosphate_butyryltransferase"/>
</dbReference>
<dbReference type="InterPro" id="IPR002505">
    <property type="entry name" value="PTA_PTB"/>
</dbReference>
<dbReference type="NCBIfam" id="TIGR02706">
    <property type="entry name" value="P_butyryltrans"/>
    <property type="match status" value="1"/>
</dbReference>
<dbReference type="NCBIfam" id="NF005837">
    <property type="entry name" value="PRK07742.1"/>
    <property type="match status" value="1"/>
</dbReference>
<dbReference type="NCBIfam" id="NF006045">
    <property type="entry name" value="PRK08190.1"/>
    <property type="match status" value="1"/>
</dbReference>
<dbReference type="PANTHER" id="PTHR43356">
    <property type="entry name" value="PHOSPHATE ACETYLTRANSFERASE"/>
    <property type="match status" value="1"/>
</dbReference>
<dbReference type="PANTHER" id="PTHR43356:SF2">
    <property type="entry name" value="PHOSPHATE ACETYLTRANSFERASE"/>
    <property type="match status" value="1"/>
</dbReference>
<dbReference type="Pfam" id="PF01515">
    <property type="entry name" value="PTA_PTB"/>
    <property type="match status" value="1"/>
</dbReference>
<dbReference type="PIRSF" id="PIRSF000428">
    <property type="entry name" value="P_Ac_trans"/>
    <property type="match status" value="1"/>
</dbReference>
<dbReference type="SUPFAM" id="SSF53659">
    <property type="entry name" value="Isocitrate/Isopropylmalate dehydrogenase-like"/>
    <property type="match status" value="1"/>
</dbReference>
<organism>
    <name type="scientific">Bacillus subtilis (strain 168)</name>
    <dbReference type="NCBI Taxonomy" id="224308"/>
    <lineage>
        <taxon>Bacteria</taxon>
        <taxon>Bacillati</taxon>
        <taxon>Bacillota</taxon>
        <taxon>Bacilli</taxon>
        <taxon>Bacillales</taxon>
        <taxon>Bacillaceae</taxon>
        <taxon>Bacillus</taxon>
    </lineage>
</organism>
<comment type="function">
    <text>Catalyzes the conversion of butyryl-CoA through butyryl phosphate to butyrate.</text>
</comment>
<comment type="catalytic activity">
    <reaction>
        <text>butanoyl-CoA + phosphate = butanoyl phosphate + CoA</text>
        <dbReference type="Rhea" id="RHEA:20892"/>
        <dbReference type="ChEBI" id="CHEBI:43474"/>
        <dbReference type="ChEBI" id="CHEBI:57287"/>
        <dbReference type="ChEBI" id="CHEBI:57371"/>
        <dbReference type="ChEBI" id="CHEBI:58079"/>
        <dbReference type="EC" id="2.3.1.19"/>
    </reaction>
</comment>
<comment type="similarity">
    <text evidence="1">Belongs to the phosphate acetyltransferase and butyryltransferase family.</text>
</comment>
<evidence type="ECO:0000305" key="1"/>
<name>PTB_BACSU</name>
<gene>
    <name type="primary">yqiS</name>
    <name type="ordered locus">BSU24090</name>
</gene>
<feature type="chain" id="PRO_0000179154" description="Probable phosphate butyryltransferase">
    <location>
        <begin position="1"/>
        <end position="299"/>
    </location>
</feature>
<feature type="sequence conflict" description="In Ref. 1; BAA12594." evidence="1" ref="1">
    <original>A</original>
    <variation>P</variation>
    <location>
        <position position="234"/>
    </location>
</feature>
<sequence>MKLKDLIGKASIHKNKTIAVAHAEDEEVIRAVKLAAEHLSARFLLTGDSKKLNELTSSMQGHQVEIVHANTPEESAKLAVRAVHHKTADVLMKGNVPTSVLLKAVLNRQEGLRSASVLSHVAVFDIPDFDRLMFVTDSAMNIAPSLEELRQILQNAVHVAHAVGNNMPKAAALAAVETVNPKMEATVNAAALAQMYKRGQIKGCIVDGPLALDNAVSQIAAAQKKISGDVAGNADILLVPTIEAGNILYKSLIYFAKASVAAVITGAKAPIALTSRADSAENKLYSIALAICASEEYTH</sequence>
<protein>
    <recommendedName>
        <fullName>Probable phosphate butyryltransferase</fullName>
        <ecNumber>2.3.1.19</ecNumber>
    </recommendedName>
    <alternativeName>
        <fullName>Phosphotransbutyrylase</fullName>
    </alternativeName>
</protein>
<keyword id="KW-0012">Acyltransferase</keyword>
<keyword id="KW-1185">Reference proteome</keyword>
<keyword id="KW-0808">Transferase</keyword>
<proteinExistence type="inferred from homology"/>